<reference key="1">
    <citation type="submission" date="2004-11" db="EMBL/GenBank/DDBJ databases">
        <authorList>
            <consortium name="The German cDNA consortium"/>
        </authorList>
    </citation>
    <scope>NUCLEOTIDE SEQUENCE [LARGE SCALE MRNA]</scope>
    <source>
        <tissue>Brain cortex</tissue>
    </source>
</reference>
<reference key="2">
    <citation type="journal article" date="2002" name="Gene">
        <title>Structure, molecular evolution, and gene expression of primate superoxide dismutases.</title>
        <authorList>
            <person name="Fukuhara R."/>
            <person name="Tezuka T."/>
            <person name="Kageyama T."/>
        </authorList>
    </citation>
    <scope>NUCLEOTIDE SEQUENCE [MRNA] OF 25-222</scope>
</reference>
<keyword id="KW-0007">Acetylation</keyword>
<keyword id="KW-0464">Manganese</keyword>
<keyword id="KW-0479">Metal-binding</keyword>
<keyword id="KW-0496">Mitochondrion</keyword>
<keyword id="KW-0944">Nitration</keyword>
<keyword id="KW-0560">Oxidoreductase</keyword>
<keyword id="KW-0809">Transit peptide</keyword>
<keyword id="KW-0832">Ubl conjugation</keyword>
<feature type="transit peptide" description="Mitochondrion" evidence="1">
    <location>
        <begin position="1"/>
        <end position="24"/>
    </location>
</feature>
<feature type="chain" id="PRO_0000032872" description="Superoxide dismutase [Mn], mitochondrial">
    <location>
        <begin position="25"/>
        <end position="222"/>
    </location>
</feature>
<feature type="binding site" evidence="1">
    <location>
        <position position="50"/>
    </location>
    <ligand>
        <name>Mn(2+)</name>
        <dbReference type="ChEBI" id="CHEBI:29035"/>
    </ligand>
</feature>
<feature type="binding site" evidence="1">
    <location>
        <position position="98"/>
    </location>
    <ligand>
        <name>Mn(2+)</name>
        <dbReference type="ChEBI" id="CHEBI:29035"/>
    </ligand>
</feature>
<feature type="binding site" evidence="1">
    <location>
        <position position="183"/>
    </location>
    <ligand>
        <name>Mn(2+)</name>
        <dbReference type="ChEBI" id="CHEBI:29035"/>
    </ligand>
</feature>
<feature type="binding site" evidence="1">
    <location>
        <position position="187"/>
    </location>
    <ligand>
        <name>Mn(2+)</name>
        <dbReference type="ChEBI" id="CHEBI:29035"/>
    </ligand>
</feature>
<feature type="modified residue" description="3'-nitrotyrosine" evidence="2">
    <location>
        <position position="58"/>
    </location>
</feature>
<feature type="modified residue" description="N6-acetyllysine; alternate" evidence="2">
    <location>
        <position position="68"/>
    </location>
</feature>
<feature type="modified residue" description="N6-succinyllysine; alternate" evidence="4">
    <location>
        <position position="68"/>
    </location>
</feature>
<feature type="modified residue" description="N6-acetyllysine; alternate" evidence="4">
    <location>
        <position position="75"/>
    </location>
</feature>
<feature type="modified residue" description="N6-succinyllysine; alternate" evidence="4">
    <location>
        <position position="75"/>
    </location>
</feature>
<feature type="modified residue" description="N6-acetyllysine" evidence="4">
    <location>
        <position position="114"/>
    </location>
</feature>
<feature type="modified residue" description="N6-acetyllysine; alternate" evidence="4">
    <location>
        <position position="122"/>
    </location>
</feature>
<feature type="modified residue" description="N6-succinyllysine; alternate" evidence="4">
    <location>
        <position position="122"/>
    </location>
</feature>
<feature type="modified residue" description="N6-acetyllysine; alternate" evidence="2">
    <location>
        <position position="130"/>
    </location>
</feature>
<feature type="modified residue" description="N6-succinyllysine; alternate" evidence="4">
    <location>
        <position position="130"/>
    </location>
</feature>
<feature type="modified residue" description="N6-acetyllysine" evidence="4">
    <location>
        <position position="202"/>
    </location>
</feature>
<comment type="function">
    <text evidence="3">Destroys superoxide anion radicals which are normally produced within the cells and which are toxic to biological systems.</text>
</comment>
<comment type="catalytic activity">
    <reaction>
        <text>2 superoxide + 2 H(+) = H2O2 + O2</text>
        <dbReference type="Rhea" id="RHEA:20696"/>
        <dbReference type="ChEBI" id="CHEBI:15378"/>
        <dbReference type="ChEBI" id="CHEBI:15379"/>
        <dbReference type="ChEBI" id="CHEBI:16240"/>
        <dbReference type="ChEBI" id="CHEBI:18421"/>
        <dbReference type="EC" id="1.15.1.1"/>
    </reaction>
</comment>
<comment type="cofactor">
    <cofactor evidence="2">
        <name>Mn(2+)</name>
        <dbReference type="ChEBI" id="CHEBI:29035"/>
    </cofactor>
    <text evidence="2">Binds 1 Mn(2+) ion per subunit.</text>
</comment>
<comment type="subunit">
    <text evidence="1">Homotetramer.</text>
</comment>
<comment type="subcellular location">
    <subcellularLocation>
        <location evidence="1">Mitochondrion matrix</location>
    </subcellularLocation>
</comment>
<comment type="PTM">
    <text evidence="3">Nitrated under oxidative stress. Nitration coupled with oxidation inhibits the catalytic activity.</text>
</comment>
<comment type="PTM">
    <text evidence="2">Acetylation at Lys-122 decreases enzymatic activity. Deacetylated by SIRT3 upon exposure to ionizing radiations or after long fasting (By similarity).</text>
</comment>
<comment type="PTM">
    <text evidence="2">Polyubiquitinated; leading to proteasomal degradation. Deubiquitinated by USP36 which increases protein stability.</text>
</comment>
<comment type="similarity">
    <text evidence="5">Belongs to the iron/manganese superoxide dismutase family.</text>
</comment>
<comment type="sequence caution" evidence="5">
    <conflict type="erroneous initiation">
        <sequence resource="EMBL-CDS" id="BAC20354"/>
    </conflict>
    <text>Extended N-terminus.</text>
</comment>
<name>SODM_PONPY</name>
<sequence>MLSRGVCGTSRQLAPALGYLGSRQKHSLPDLPYDYGALEPHINAQIMQLHHSKHHAAYVNNLNVTEEKYQEALAKGDVTAQIALQPALKFNGGGHINHSIFWTNLSPNGGGEPKGELLEAIKRDFGSFDKFKEKLTAASVGVQGSGWGWLGFNKERGHLQIAACPNQDPLQGTTGLIPLLGIDVWEHAYYLQYKNVRPDYLKAIWNVINWENVTERYMACKK</sequence>
<dbReference type="EC" id="1.15.1.1"/>
<dbReference type="EMBL" id="CR861415">
    <property type="protein sequence ID" value="CAH93471.1"/>
    <property type="molecule type" value="mRNA"/>
</dbReference>
<dbReference type="EMBL" id="AB087275">
    <property type="protein sequence ID" value="BAC20354.1"/>
    <property type="status" value="ALT_INIT"/>
    <property type="molecule type" value="mRNA"/>
</dbReference>
<dbReference type="SMR" id="Q8HXP6"/>
<dbReference type="KEGG" id="pon:100174061"/>
<dbReference type="GO" id="GO:0005759">
    <property type="term" value="C:mitochondrial matrix"/>
    <property type="evidence" value="ECO:0007669"/>
    <property type="project" value="UniProtKB-SubCell"/>
</dbReference>
<dbReference type="GO" id="GO:0030145">
    <property type="term" value="F:manganese ion binding"/>
    <property type="evidence" value="ECO:0000250"/>
    <property type="project" value="UniProtKB"/>
</dbReference>
<dbReference type="GO" id="GO:0004784">
    <property type="term" value="F:superoxide dismutase activity"/>
    <property type="evidence" value="ECO:0000250"/>
    <property type="project" value="UniProtKB"/>
</dbReference>
<dbReference type="GO" id="GO:0034599">
    <property type="term" value="P:cellular response to oxidative stress"/>
    <property type="evidence" value="ECO:0000250"/>
    <property type="project" value="UniProtKB"/>
</dbReference>
<dbReference type="GO" id="GO:0006357">
    <property type="term" value="P:regulation of transcription by RNA polymerase II"/>
    <property type="evidence" value="ECO:0000250"/>
    <property type="project" value="UniProtKB"/>
</dbReference>
<dbReference type="GO" id="GO:0006801">
    <property type="term" value="P:superoxide metabolic process"/>
    <property type="evidence" value="ECO:0000250"/>
    <property type="project" value="UniProtKB"/>
</dbReference>
<dbReference type="FunFam" id="1.10.287.990:FF:000001">
    <property type="entry name" value="Superoxide dismutase"/>
    <property type="match status" value="1"/>
</dbReference>
<dbReference type="FunFam" id="3.55.40.20:FF:000003">
    <property type="entry name" value="Superoxide dismutase [Mn], mitochondrial"/>
    <property type="match status" value="1"/>
</dbReference>
<dbReference type="Gene3D" id="1.10.287.990">
    <property type="entry name" value="Fe,Mn superoxide dismutase (SOD) domain"/>
    <property type="match status" value="1"/>
</dbReference>
<dbReference type="Gene3D" id="3.55.40.20">
    <property type="entry name" value="Iron/manganese superoxide dismutase, C-terminal domain"/>
    <property type="match status" value="1"/>
</dbReference>
<dbReference type="InterPro" id="IPR050265">
    <property type="entry name" value="Fe/Mn_Superoxide_Dismutase"/>
</dbReference>
<dbReference type="InterPro" id="IPR001189">
    <property type="entry name" value="Mn/Fe_SOD"/>
</dbReference>
<dbReference type="InterPro" id="IPR019833">
    <property type="entry name" value="Mn/Fe_SOD_BS"/>
</dbReference>
<dbReference type="InterPro" id="IPR019832">
    <property type="entry name" value="Mn/Fe_SOD_C"/>
</dbReference>
<dbReference type="InterPro" id="IPR019831">
    <property type="entry name" value="Mn/Fe_SOD_N"/>
</dbReference>
<dbReference type="InterPro" id="IPR036324">
    <property type="entry name" value="Mn/Fe_SOD_N_sf"/>
</dbReference>
<dbReference type="InterPro" id="IPR036314">
    <property type="entry name" value="SOD_C_sf"/>
</dbReference>
<dbReference type="PANTHER" id="PTHR11404">
    <property type="entry name" value="SUPEROXIDE DISMUTASE 2"/>
    <property type="match status" value="1"/>
</dbReference>
<dbReference type="PANTHER" id="PTHR11404:SF6">
    <property type="entry name" value="SUPEROXIDE DISMUTASE [MN], MITOCHONDRIAL"/>
    <property type="match status" value="1"/>
</dbReference>
<dbReference type="Pfam" id="PF02777">
    <property type="entry name" value="Sod_Fe_C"/>
    <property type="match status" value="1"/>
</dbReference>
<dbReference type="Pfam" id="PF00081">
    <property type="entry name" value="Sod_Fe_N"/>
    <property type="match status" value="1"/>
</dbReference>
<dbReference type="PIRSF" id="PIRSF000349">
    <property type="entry name" value="SODismutase"/>
    <property type="match status" value="1"/>
</dbReference>
<dbReference type="PRINTS" id="PR01703">
    <property type="entry name" value="MNSODISMTASE"/>
</dbReference>
<dbReference type="SUPFAM" id="SSF54719">
    <property type="entry name" value="Fe,Mn superoxide dismutase (SOD), C-terminal domain"/>
    <property type="match status" value="1"/>
</dbReference>
<dbReference type="SUPFAM" id="SSF46609">
    <property type="entry name" value="Fe,Mn superoxide dismutase (SOD), N-terminal domain"/>
    <property type="match status" value="1"/>
</dbReference>
<dbReference type="PROSITE" id="PS00088">
    <property type="entry name" value="SOD_MN"/>
    <property type="match status" value="1"/>
</dbReference>
<gene>
    <name type="primary">SOD2</name>
</gene>
<protein>
    <recommendedName>
        <fullName>Superoxide dismutase [Mn], mitochondrial</fullName>
        <ecNumber>1.15.1.1</ecNumber>
    </recommendedName>
</protein>
<accession>Q8HXP6</accession>
<accession>Q5R445</accession>
<proteinExistence type="evidence at transcript level"/>
<evidence type="ECO:0000250" key="1"/>
<evidence type="ECO:0000250" key="2">
    <source>
        <dbReference type="UniProtKB" id="P04179"/>
    </source>
</evidence>
<evidence type="ECO:0000250" key="3">
    <source>
        <dbReference type="UniProtKB" id="P07895"/>
    </source>
</evidence>
<evidence type="ECO:0000250" key="4">
    <source>
        <dbReference type="UniProtKB" id="P09671"/>
    </source>
</evidence>
<evidence type="ECO:0000305" key="5"/>
<organism>
    <name type="scientific">Pongo pygmaeus</name>
    <name type="common">Bornean orangutan</name>
    <dbReference type="NCBI Taxonomy" id="9600"/>
    <lineage>
        <taxon>Eukaryota</taxon>
        <taxon>Metazoa</taxon>
        <taxon>Chordata</taxon>
        <taxon>Craniata</taxon>
        <taxon>Vertebrata</taxon>
        <taxon>Euteleostomi</taxon>
        <taxon>Mammalia</taxon>
        <taxon>Eutheria</taxon>
        <taxon>Euarchontoglires</taxon>
        <taxon>Primates</taxon>
        <taxon>Haplorrhini</taxon>
        <taxon>Catarrhini</taxon>
        <taxon>Hominidae</taxon>
        <taxon>Pongo</taxon>
    </lineage>
</organism>